<dbReference type="EC" id="6.1.1.19" evidence="1"/>
<dbReference type="EMBL" id="CP001097">
    <property type="protein sequence ID" value="ACD91503.1"/>
    <property type="molecule type" value="Genomic_DNA"/>
</dbReference>
<dbReference type="RefSeq" id="WP_012467367.1">
    <property type="nucleotide sequence ID" value="NC_010803.1"/>
</dbReference>
<dbReference type="SMR" id="B3EIJ1"/>
<dbReference type="STRING" id="290315.Clim_2484"/>
<dbReference type="KEGG" id="cli:Clim_2484"/>
<dbReference type="eggNOG" id="COG0018">
    <property type="taxonomic scope" value="Bacteria"/>
</dbReference>
<dbReference type="HOGENOM" id="CLU_006406_0_1_10"/>
<dbReference type="OrthoDB" id="9805987at2"/>
<dbReference type="Proteomes" id="UP000008841">
    <property type="component" value="Chromosome"/>
</dbReference>
<dbReference type="GO" id="GO:0005737">
    <property type="term" value="C:cytoplasm"/>
    <property type="evidence" value="ECO:0007669"/>
    <property type="project" value="UniProtKB-SubCell"/>
</dbReference>
<dbReference type="GO" id="GO:0004814">
    <property type="term" value="F:arginine-tRNA ligase activity"/>
    <property type="evidence" value="ECO:0007669"/>
    <property type="project" value="UniProtKB-UniRule"/>
</dbReference>
<dbReference type="GO" id="GO:0005524">
    <property type="term" value="F:ATP binding"/>
    <property type="evidence" value="ECO:0007669"/>
    <property type="project" value="UniProtKB-UniRule"/>
</dbReference>
<dbReference type="GO" id="GO:0006420">
    <property type="term" value="P:arginyl-tRNA aminoacylation"/>
    <property type="evidence" value="ECO:0007669"/>
    <property type="project" value="UniProtKB-UniRule"/>
</dbReference>
<dbReference type="CDD" id="cd07956">
    <property type="entry name" value="Anticodon_Ia_Arg"/>
    <property type="match status" value="1"/>
</dbReference>
<dbReference type="FunFam" id="1.10.730.10:FF:000008">
    <property type="entry name" value="Arginine--tRNA ligase"/>
    <property type="match status" value="1"/>
</dbReference>
<dbReference type="Gene3D" id="3.30.1360.70">
    <property type="entry name" value="Arginyl tRNA synthetase N-terminal domain"/>
    <property type="match status" value="1"/>
</dbReference>
<dbReference type="Gene3D" id="3.40.50.620">
    <property type="entry name" value="HUPs"/>
    <property type="match status" value="1"/>
</dbReference>
<dbReference type="Gene3D" id="1.10.730.10">
    <property type="entry name" value="Isoleucyl-tRNA Synthetase, Domain 1"/>
    <property type="match status" value="1"/>
</dbReference>
<dbReference type="HAMAP" id="MF_00123">
    <property type="entry name" value="Arg_tRNA_synth"/>
    <property type="match status" value="1"/>
</dbReference>
<dbReference type="InterPro" id="IPR001278">
    <property type="entry name" value="Arg-tRNA-ligase"/>
</dbReference>
<dbReference type="InterPro" id="IPR005148">
    <property type="entry name" value="Arg-tRNA-synth_N"/>
</dbReference>
<dbReference type="InterPro" id="IPR036695">
    <property type="entry name" value="Arg-tRNA-synth_N_sf"/>
</dbReference>
<dbReference type="InterPro" id="IPR035684">
    <property type="entry name" value="ArgRS_core"/>
</dbReference>
<dbReference type="InterPro" id="IPR008909">
    <property type="entry name" value="DALR_anticod-bd"/>
</dbReference>
<dbReference type="InterPro" id="IPR014729">
    <property type="entry name" value="Rossmann-like_a/b/a_fold"/>
</dbReference>
<dbReference type="InterPro" id="IPR009080">
    <property type="entry name" value="tRNAsynth_Ia_anticodon-bd"/>
</dbReference>
<dbReference type="NCBIfam" id="TIGR00456">
    <property type="entry name" value="argS"/>
    <property type="match status" value="1"/>
</dbReference>
<dbReference type="PANTHER" id="PTHR11956:SF5">
    <property type="entry name" value="ARGININE--TRNA LIGASE, CYTOPLASMIC"/>
    <property type="match status" value="1"/>
</dbReference>
<dbReference type="PANTHER" id="PTHR11956">
    <property type="entry name" value="ARGINYL-TRNA SYNTHETASE"/>
    <property type="match status" value="1"/>
</dbReference>
<dbReference type="Pfam" id="PF03485">
    <property type="entry name" value="Arg_tRNA_synt_N"/>
    <property type="match status" value="1"/>
</dbReference>
<dbReference type="Pfam" id="PF05746">
    <property type="entry name" value="DALR_1"/>
    <property type="match status" value="1"/>
</dbReference>
<dbReference type="Pfam" id="PF00750">
    <property type="entry name" value="tRNA-synt_1d"/>
    <property type="match status" value="1"/>
</dbReference>
<dbReference type="PRINTS" id="PR01038">
    <property type="entry name" value="TRNASYNTHARG"/>
</dbReference>
<dbReference type="SMART" id="SM01016">
    <property type="entry name" value="Arg_tRNA_synt_N"/>
    <property type="match status" value="1"/>
</dbReference>
<dbReference type="SMART" id="SM00836">
    <property type="entry name" value="DALR_1"/>
    <property type="match status" value="1"/>
</dbReference>
<dbReference type="SUPFAM" id="SSF47323">
    <property type="entry name" value="Anticodon-binding domain of a subclass of class I aminoacyl-tRNA synthetases"/>
    <property type="match status" value="1"/>
</dbReference>
<dbReference type="SUPFAM" id="SSF55190">
    <property type="entry name" value="Arginyl-tRNA synthetase (ArgRS), N-terminal 'additional' domain"/>
    <property type="match status" value="1"/>
</dbReference>
<dbReference type="SUPFAM" id="SSF52374">
    <property type="entry name" value="Nucleotidylyl transferase"/>
    <property type="match status" value="1"/>
</dbReference>
<proteinExistence type="inferred from homology"/>
<protein>
    <recommendedName>
        <fullName evidence="1">Arginine--tRNA ligase</fullName>
        <ecNumber evidence="1">6.1.1.19</ecNumber>
    </recommendedName>
    <alternativeName>
        <fullName evidence="1">Arginyl-tRNA synthetase</fullName>
        <shortName evidence="1">ArgRS</shortName>
    </alternativeName>
</protein>
<evidence type="ECO:0000255" key="1">
    <source>
        <dbReference type="HAMAP-Rule" id="MF_00123"/>
    </source>
</evidence>
<comment type="catalytic activity">
    <reaction evidence="1">
        <text>tRNA(Arg) + L-arginine + ATP = L-arginyl-tRNA(Arg) + AMP + diphosphate</text>
        <dbReference type="Rhea" id="RHEA:20301"/>
        <dbReference type="Rhea" id="RHEA-COMP:9658"/>
        <dbReference type="Rhea" id="RHEA-COMP:9673"/>
        <dbReference type="ChEBI" id="CHEBI:30616"/>
        <dbReference type="ChEBI" id="CHEBI:32682"/>
        <dbReference type="ChEBI" id="CHEBI:33019"/>
        <dbReference type="ChEBI" id="CHEBI:78442"/>
        <dbReference type="ChEBI" id="CHEBI:78513"/>
        <dbReference type="ChEBI" id="CHEBI:456215"/>
        <dbReference type="EC" id="6.1.1.19"/>
    </reaction>
</comment>
<comment type="subunit">
    <text evidence="1">Monomer.</text>
</comment>
<comment type="subcellular location">
    <subcellularLocation>
        <location evidence="1">Cytoplasm</location>
    </subcellularLocation>
</comment>
<comment type="similarity">
    <text evidence="1">Belongs to the class-I aminoacyl-tRNA synthetase family.</text>
</comment>
<sequence length="551" mass="62064">MQEFLLPVIKSALQSAAIETDKPVQIEKPTDKKNGDFSTNIALLLSKECRRNPRELAAELIGQMIFPDGTVERIEIAGPGFINFYLTPLFIMQSVEHILLEGKGYGSSCAGKGKTAIVEYVSANPTGPLTIGRGRGGVLGDCIANLLATQGYGLTREYYFNDAGRQMQILGESVRYRYMERCGRDIVFPESHYQGEYIREIAEILFLEHESSLIDSDNLSIFKDTAEAIIFSSIKKTLARIDIRHDSFFNEHTLYIAEGNGKSANDRVLELLESKGFIDRYDGATWFLTTKLGQEKDKVLVKSSGEPSYRLPDIAYHLDKYRRKFDLIVNVFGADHIDEYPDVLEALRILGHDTSKMRVAINQFVTTTVDGETVKMSTRKGNADLLDELIDDVGADATRLFFIMRSKDSHLNFDIELAKKQSKDNPVFYLQYAHARICSLLRIAAEEAGFKPDGSGAHLLQKLTLEPEIQLGFTLLDYPEVIRTAIRLLEPQKMVEYLHSVAEQYHKFYQECPILKADPDIRTARLFLSLATRQVLRNGFTILGISAPESM</sequence>
<name>SYR_CHLL2</name>
<feature type="chain" id="PRO_1000095348" description="Arginine--tRNA ligase">
    <location>
        <begin position="1"/>
        <end position="551"/>
    </location>
</feature>
<feature type="short sequence motif" description="'HIGH' region">
    <location>
        <begin position="123"/>
        <end position="133"/>
    </location>
</feature>
<keyword id="KW-0030">Aminoacyl-tRNA synthetase</keyword>
<keyword id="KW-0067">ATP-binding</keyword>
<keyword id="KW-0963">Cytoplasm</keyword>
<keyword id="KW-0436">Ligase</keyword>
<keyword id="KW-0547">Nucleotide-binding</keyword>
<keyword id="KW-0648">Protein biosynthesis</keyword>
<reference key="1">
    <citation type="submission" date="2008-05" db="EMBL/GenBank/DDBJ databases">
        <title>Complete sequence of Chlorobium limicola DSM 245.</title>
        <authorList>
            <consortium name="US DOE Joint Genome Institute"/>
            <person name="Lucas S."/>
            <person name="Copeland A."/>
            <person name="Lapidus A."/>
            <person name="Glavina del Rio T."/>
            <person name="Dalin E."/>
            <person name="Tice H."/>
            <person name="Bruce D."/>
            <person name="Goodwin L."/>
            <person name="Pitluck S."/>
            <person name="Schmutz J."/>
            <person name="Larimer F."/>
            <person name="Land M."/>
            <person name="Hauser L."/>
            <person name="Kyrpides N."/>
            <person name="Ovchinnikova G."/>
            <person name="Zhao F."/>
            <person name="Li T."/>
            <person name="Liu Z."/>
            <person name="Overmann J."/>
            <person name="Bryant D.A."/>
            <person name="Richardson P."/>
        </authorList>
    </citation>
    <scope>NUCLEOTIDE SEQUENCE [LARGE SCALE GENOMIC DNA]</scope>
    <source>
        <strain>DSM 245 / NBRC 103803 / 6330</strain>
    </source>
</reference>
<gene>
    <name evidence="1" type="primary">argS</name>
    <name type="ordered locus">Clim_2484</name>
</gene>
<accession>B3EIJ1</accession>
<organism>
    <name type="scientific">Chlorobium limicola (strain DSM 245 / NBRC 103803 / 6330)</name>
    <dbReference type="NCBI Taxonomy" id="290315"/>
    <lineage>
        <taxon>Bacteria</taxon>
        <taxon>Pseudomonadati</taxon>
        <taxon>Chlorobiota</taxon>
        <taxon>Chlorobiia</taxon>
        <taxon>Chlorobiales</taxon>
        <taxon>Chlorobiaceae</taxon>
        <taxon>Chlorobium/Pelodictyon group</taxon>
        <taxon>Chlorobium</taxon>
    </lineage>
</organism>